<comment type="function">
    <text evidence="1">Involved in pre-25S rRNA processing.</text>
</comment>
<comment type="subcellular location">
    <subcellularLocation>
        <location evidence="1">Nucleus</location>
        <location evidence="1">Nucleolus</location>
    </subcellularLocation>
</comment>
<comment type="similarity">
    <text evidence="4">Belongs to the RRM RBM34 family.</text>
</comment>
<evidence type="ECO:0000250" key="1"/>
<evidence type="ECO:0000255" key="2">
    <source>
        <dbReference type="PROSITE-ProRule" id="PRU00176"/>
    </source>
</evidence>
<evidence type="ECO:0000256" key="3">
    <source>
        <dbReference type="SAM" id="MobiDB-lite"/>
    </source>
</evidence>
<evidence type="ECO:0000305" key="4"/>
<name>NOP12_CANAL</name>
<dbReference type="EMBL" id="CP017624">
    <property type="protein sequence ID" value="AOW27438.1"/>
    <property type="molecule type" value="Genomic_DNA"/>
</dbReference>
<dbReference type="RefSeq" id="XP_720933.2">
    <property type="nucleotide sequence ID" value="XM_715840.2"/>
</dbReference>
<dbReference type="SMR" id="Q5AHI7"/>
<dbReference type="FunCoup" id="Q5AHI7">
    <property type="interactions" value="888"/>
</dbReference>
<dbReference type="STRING" id="237561.Q5AHI7"/>
<dbReference type="EnsemblFungi" id="C2_04120C_A-T">
    <property type="protein sequence ID" value="C2_04120C_A-T-p1"/>
    <property type="gene ID" value="C2_04120C_A"/>
</dbReference>
<dbReference type="GeneID" id="3637377"/>
<dbReference type="KEGG" id="cal:CAALFM_C204120CA"/>
<dbReference type="CGD" id="CAL0000199505">
    <property type="gene designation" value="orf19.8429"/>
</dbReference>
<dbReference type="VEuPathDB" id="FungiDB:C2_04120C_A"/>
<dbReference type="eggNOG" id="KOG0118">
    <property type="taxonomic scope" value="Eukaryota"/>
</dbReference>
<dbReference type="HOGENOM" id="CLU_006468_0_0_1"/>
<dbReference type="InParanoid" id="Q5AHI7"/>
<dbReference type="OrthoDB" id="442677at2759"/>
<dbReference type="PRO" id="PR:Q5AHI7"/>
<dbReference type="Proteomes" id="UP000000559">
    <property type="component" value="Chromosome 2"/>
</dbReference>
<dbReference type="GO" id="GO:0005730">
    <property type="term" value="C:nucleolus"/>
    <property type="evidence" value="ECO:0000318"/>
    <property type="project" value="GO_Central"/>
</dbReference>
<dbReference type="GO" id="GO:0030684">
    <property type="term" value="C:preribosome"/>
    <property type="evidence" value="ECO:0007669"/>
    <property type="project" value="EnsemblFungi"/>
</dbReference>
<dbReference type="GO" id="GO:0003723">
    <property type="term" value="F:RNA binding"/>
    <property type="evidence" value="ECO:0000318"/>
    <property type="project" value="GO_Central"/>
</dbReference>
<dbReference type="GO" id="GO:0019843">
    <property type="term" value="F:rRNA binding"/>
    <property type="evidence" value="ECO:0007669"/>
    <property type="project" value="EnsemblFungi"/>
</dbReference>
<dbReference type="GO" id="GO:0000463">
    <property type="term" value="P:maturation of LSU-rRNA from tricistronic rRNA transcript (SSU-rRNA, 5.8S rRNA, LSU-rRNA)"/>
    <property type="evidence" value="ECO:0000318"/>
    <property type="project" value="GO_Central"/>
</dbReference>
<dbReference type="Gene3D" id="3.30.70.330">
    <property type="match status" value="2"/>
</dbReference>
<dbReference type="InterPro" id="IPR012677">
    <property type="entry name" value="Nucleotide-bd_a/b_plait_sf"/>
</dbReference>
<dbReference type="InterPro" id="IPR035979">
    <property type="entry name" value="RBD_domain_sf"/>
</dbReference>
<dbReference type="InterPro" id="IPR000504">
    <property type="entry name" value="RRM_dom"/>
</dbReference>
<dbReference type="PANTHER" id="PTHR23236">
    <property type="entry name" value="EUKARYOTIC TRANSLATION INITIATION FACTOR 4B/4H"/>
    <property type="match status" value="1"/>
</dbReference>
<dbReference type="PANTHER" id="PTHR23236:SF25">
    <property type="entry name" value="RNA-BINDING PROTEIN 34"/>
    <property type="match status" value="1"/>
</dbReference>
<dbReference type="Pfam" id="PF00076">
    <property type="entry name" value="RRM_1"/>
    <property type="match status" value="1"/>
</dbReference>
<dbReference type="SMART" id="SM00360">
    <property type="entry name" value="RRM"/>
    <property type="match status" value="2"/>
</dbReference>
<dbReference type="SUPFAM" id="SSF54928">
    <property type="entry name" value="RNA-binding domain, RBD"/>
    <property type="match status" value="2"/>
</dbReference>
<dbReference type="PROSITE" id="PS50102">
    <property type="entry name" value="RRM"/>
    <property type="match status" value="2"/>
</dbReference>
<keyword id="KW-0539">Nucleus</keyword>
<keyword id="KW-1185">Reference proteome</keyword>
<keyword id="KW-0677">Repeat</keyword>
<keyword id="KW-0690">Ribosome biogenesis</keyword>
<keyword id="KW-0694">RNA-binding</keyword>
<keyword id="KW-0698">rRNA processing</keyword>
<reference key="1">
    <citation type="journal article" date="2004" name="Proc. Natl. Acad. Sci. U.S.A.">
        <title>The diploid genome sequence of Candida albicans.</title>
        <authorList>
            <person name="Jones T."/>
            <person name="Federspiel N.A."/>
            <person name="Chibana H."/>
            <person name="Dungan J."/>
            <person name="Kalman S."/>
            <person name="Magee B.B."/>
            <person name="Newport G."/>
            <person name="Thorstenson Y.R."/>
            <person name="Agabian N."/>
            <person name="Magee P.T."/>
            <person name="Davis R.W."/>
            <person name="Scherer S."/>
        </authorList>
    </citation>
    <scope>NUCLEOTIDE SEQUENCE [LARGE SCALE GENOMIC DNA]</scope>
    <source>
        <strain>SC5314 / ATCC MYA-2876</strain>
    </source>
</reference>
<reference key="2">
    <citation type="journal article" date="2007" name="Genome Biol.">
        <title>Assembly of the Candida albicans genome into sixteen supercontigs aligned on the eight chromosomes.</title>
        <authorList>
            <person name="van het Hoog M."/>
            <person name="Rast T.J."/>
            <person name="Martchenko M."/>
            <person name="Grindle S."/>
            <person name="Dignard D."/>
            <person name="Hogues H."/>
            <person name="Cuomo C."/>
            <person name="Berriman M."/>
            <person name="Scherer S."/>
            <person name="Magee B.B."/>
            <person name="Whiteway M."/>
            <person name="Chibana H."/>
            <person name="Nantel A."/>
            <person name="Magee P.T."/>
        </authorList>
    </citation>
    <scope>GENOME REANNOTATION</scope>
    <source>
        <strain>SC5314 / ATCC MYA-2876</strain>
    </source>
</reference>
<reference key="3">
    <citation type="journal article" date="2013" name="Genome Biol.">
        <title>Assembly of a phased diploid Candida albicans genome facilitates allele-specific measurements and provides a simple model for repeat and indel structure.</title>
        <authorList>
            <person name="Muzzey D."/>
            <person name="Schwartz K."/>
            <person name="Weissman J.S."/>
            <person name="Sherlock G."/>
        </authorList>
    </citation>
    <scope>NUCLEOTIDE SEQUENCE [LARGE SCALE GENOMIC DNA]</scope>
    <scope>GENOME REANNOTATION</scope>
    <source>
        <strain>SC5314 / ATCC MYA-2876</strain>
    </source>
</reference>
<sequence>MSSFANLFGKSTKVDENIEQLFKNTRDGPVSKDELVKKQRTVIKIPKVTAPKQQTNENESTLNQSANESDEEEEEYNDESNEGDDSDDAEQTEPTSKNDDENENLEAQYFDKLLSEQNEEQDESKESSEAKSSKVAEERTKAKVATTVDLKEKELEKADRTVFVGNVPADVITSKIIAKNFKNLFKHYGKIDSIRYRSISFDEHLPRKVAFAKKNLHKSRDSVNAYIVYKEKPASIAAKELNATVFEDHHLRVDHVSHPAPKDNKRTIFVGNLDFEEKEETLWKYFNSKLDQDVESVRIIRDSKTNLGKGFALVQFKDTLSVNKALLLNDKPLETGTQKKGRKLRISRAKSNAKPSLMSPNHFDNQKKKFAAGKSQQKLNDNQKTKIGRAQSTLGKADRSTVGKAKRIILEGQRATKGEAIKGIKGSKKGKKVKKPRIRERSTKFKEERKTMNKV</sequence>
<gene>
    <name type="primary">NOP12</name>
    <name type="ordered locus">CAALFM_C204120CA</name>
    <name type="ORF">CaO19.809</name>
    <name type="ORF">CaO19.8429</name>
</gene>
<feature type="chain" id="PRO_0000081666" description="Nucleolar protein 12">
    <location>
        <begin position="1"/>
        <end position="455"/>
    </location>
</feature>
<feature type="domain" description="RRM 1" evidence="2">
    <location>
        <begin position="160"/>
        <end position="258"/>
    </location>
</feature>
<feature type="domain" description="RRM 2" evidence="2">
    <location>
        <begin position="266"/>
        <end position="351"/>
    </location>
</feature>
<feature type="region of interest" description="Disordered" evidence="3">
    <location>
        <begin position="1"/>
        <end position="104"/>
    </location>
</feature>
<feature type="region of interest" description="Disordered" evidence="3">
    <location>
        <begin position="117"/>
        <end position="142"/>
    </location>
</feature>
<feature type="region of interest" description="Disordered" evidence="3">
    <location>
        <begin position="333"/>
        <end position="402"/>
    </location>
</feature>
<feature type="region of interest" description="Disordered" evidence="3">
    <location>
        <begin position="420"/>
        <end position="455"/>
    </location>
</feature>
<feature type="compositionally biased region" description="Basic and acidic residues" evidence="3">
    <location>
        <begin position="24"/>
        <end position="37"/>
    </location>
</feature>
<feature type="compositionally biased region" description="Polar residues" evidence="3">
    <location>
        <begin position="51"/>
        <end position="66"/>
    </location>
</feature>
<feature type="compositionally biased region" description="Acidic residues" evidence="3">
    <location>
        <begin position="68"/>
        <end position="91"/>
    </location>
</feature>
<feature type="compositionally biased region" description="Basic and acidic residues" evidence="3">
    <location>
        <begin position="124"/>
        <end position="141"/>
    </location>
</feature>
<feature type="compositionally biased region" description="Basic residues" evidence="3">
    <location>
        <begin position="339"/>
        <end position="348"/>
    </location>
</feature>
<feature type="compositionally biased region" description="Polar residues" evidence="3">
    <location>
        <begin position="349"/>
        <end position="363"/>
    </location>
</feature>
<feature type="compositionally biased region" description="Basic residues" evidence="3">
    <location>
        <begin position="425"/>
        <end position="438"/>
    </location>
</feature>
<feature type="compositionally biased region" description="Basic and acidic residues" evidence="3">
    <location>
        <begin position="439"/>
        <end position="455"/>
    </location>
</feature>
<organism>
    <name type="scientific">Candida albicans (strain SC5314 / ATCC MYA-2876)</name>
    <name type="common">Yeast</name>
    <dbReference type="NCBI Taxonomy" id="237561"/>
    <lineage>
        <taxon>Eukaryota</taxon>
        <taxon>Fungi</taxon>
        <taxon>Dikarya</taxon>
        <taxon>Ascomycota</taxon>
        <taxon>Saccharomycotina</taxon>
        <taxon>Pichiomycetes</taxon>
        <taxon>Debaryomycetaceae</taxon>
        <taxon>Candida/Lodderomyces clade</taxon>
        <taxon>Candida</taxon>
    </lineage>
</organism>
<proteinExistence type="inferred from homology"/>
<protein>
    <recommendedName>
        <fullName>Nucleolar protein 12</fullName>
    </recommendedName>
</protein>
<accession>Q5AHI7</accession>
<accession>A0A1D8PH24</accession>